<protein>
    <recommendedName>
        <fullName evidence="1">Small ribosomal subunit protein uS3</fullName>
    </recommendedName>
    <alternativeName>
        <fullName evidence="2">30S ribosomal protein S3</fullName>
    </alternativeName>
</protein>
<proteinExistence type="inferred from homology"/>
<organism>
    <name type="scientific">Coprothermobacter proteolyticus (strain ATCC 35245 / DSM 5265 / OCM 4 / BT)</name>
    <dbReference type="NCBI Taxonomy" id="309798"/>
    <lineage>
        <taxon>Bacteria</taxon>
        <taxon>Pseudomonadati</taxon>
        <taxon>Coprothermobacterota</taxon>
        <taxon>Coprothermobacteria</taxon>
        <taxon>Coprothermobacterales</taxon>
        <taxon>Coprothermobacteraceae</taxon>
        <taxon>Coprothermobacter</taxon>
    </lineage>
</organism>
<reference key="1">
    <citation type="submission" date="2008-08" db="EMBL/GenBank/DDBJ databases">
        <title>The complete genome sequence of Coprothermobacter proteolyticus strain ATCC 5245 / DSM 5265 / BT.</title>
        <authorList>
            <person name="Dodson R.J."/>
            <person name="Durkin A.S."/>
            <person name="Wu M."/>
            <person name="Eisen J."/>
            <person name="Sutton G."/>
        </authorList>
    </citation>
    <scope>NUCLEOTIDE SEQUENCE [LARGE SCALE GENOMIC DNA]</scope>
    <source>
        <strain>ATCC 35245 / DSM 5265 / OCM 4 / BT</strain>
    </source>
</reference>
<keyword id="KW-1185">Reference proteome</keyword>
<keyword id="KW-0687">Ribonucleoprotein</keyword>
<keyword id="KW-0689">Ribosomal protein</keyword>
<keyword id="KW-0694">RNA-binding</keyword>
<keyword id="KW-0699">rRNA-binding</keyword>
<sequence length="234" mass="26823">MGQKIHPYGFRLGVTKNWRSRWVAPFEKYPEYIVQDEKIRTLINKHYGHAGISSVEIERLGNKMRVIIWTARPGMIIGKQGAEIERLREEIVKLLKNDYEVRIAIYEVKNPETDAQIVSDSIARQIERRVSYKRAMKQAISRAMRSGAQGIKIAVSGRLGGAEIARREWFVQGKLPLSTLKSDVDYGYSIAVTKYGTIGVKCWIYKGDVEDLQELLPPRGLERAERRPERHANA</sequence>
<gene>
    <name evidence="1" type="primary">rpsC</name>
    <name type="ordered locus">COPRO5265_1007</name>
</gene>
<name>RS3_COPPD</name>
<comment type="function">
    <text evidence="1">Binds the lower part of the 30S subunit head. Binds mRNA in the 70S ribosome, positioning it for translation.</text>
</comment>
<comment type="subunit">
    <text evidence="1">Part of the 30S ribosomal subunit. Forms a tight complex with proteins S10 and S14.</text>
</comment>
<comment type="similarity">
    <text evidence="1">Belongs to the universal ribosomal protein uS3 family.</text>
</comment>
<accession>B5Y982</accession>
<evidence type="ECO:0000255" key="1">
    <source>
        <dbReference type="HAMAP-Rule" id="MF_01309"/>
    </source>
</evidence>
<evidence type="ECO:0000305" key="2"/>
<dbReference type="EMBL" id="CP001145">
    <property type="protein sequence ID" value="ACI17232.1"/>
    <property type="molecule type" value="Genomic_DNA"/>
</dbReference>
<dbReference type="RefSeq" id="WP_012543884.1">
    <property type="nucleotide sequence ID" value="NC_011295.1"/>
</dbReference>
<dbReference type="SMR" id="B5Y982"/>
<dbReference type="STRING" id="309798.COPRO5265_1007"/>
<dbReference type="KEGG" id="cpo:COPRO5265_1007"/>
<dbReference type="eggNOG" id="COG0092">
    <property type="taxonomic scope" value="Bacteria"/>
</dbReference>
<dbReference type="HOGENOM" id="CLU_058591_0_2_9"/>
<dbReference type="OrthoDB" id="9806396at2"/>
<dbReference type="Proteomes" id="UP000001732">
    <property type="component" value="Chromosome"/>
</dbReference>
<dbReference type="GO" id="GO:0022627">
    <property type="term" value="C:cytosolic small ribosomal subunit"/>
    <property type="evidence" value="ECO:0007669"/>
    <property type="project" value="TreeGrafter"/>
</dbReference>
<dbReference type="GO" id="GO:0003729">
    <property type="term" value="F:mRNA binding"/>
    <property type="evidence" value="ECO:0007669"/>
    <property type="project" value="UniProtKB-UniRule"/>
</dbReference>
<dbReference type="GO" id="GO:0019843">
    <property type="term" value="F:rRNA binding"/>
    <property type="evidence" value="ECO:0007669"/>
    <property type="project" value="UniProtKB-UniRule"/>
</dbReference>
<dbReference type="GO" id="GO:0003735">
    <property type="term" value="F:structural constituent of ribosome"/>
    <property type="evidence" value="ECO:0007669"/>
    <property type="project" value="InterPro"/>
</dbReference>
<dbReference type="GO" id="GO:0006412">
    <property type="term" value="P:translation"/>
    <property type="evidence" value="ECO:0007669"/>
    <property type="project" value="UniProtKB-UniRule"/>
</dbReference>
<dbReference type="CDD" id="cd02412">
    <property type="entry name" value="KH-II_30S_S3"/>
    <property type="match status" value="1"/>
</dbReference>
<dbReference type="FunFam" id="3.30.300.20:FF:000001">
    <property type="entry name" value="30S ribosomal protein S3"/>
    <property type="match status" value="1"/>
</dbReference>
<dbReference type="Gene3D" id="3.30.300.20">
    <property type="match status" value="1"/>
</dbReference>
<dbReference type="Gene3D" id="3.30.1140.32">
    <property type="entry name" value="Ribosomal protein S3, C-terminal domain"/>
    <property type="match status" value="1"/>
</dbReference>
<dbReference type="HAMAP" id="MF_01309_B">
    <property type="entry name" value="Ribosomal_uS3_B"/>
    <property type="match status" value="1"/>
</dbReference>
<dbReference type="InterPro" id="IPR015946">
    <property type="entry name" value="KH_dom-like_a/b"/>
</dbReference>
<dbReference type="InterPro" id="IPR004044">
    <property type="entry name" value="KH_dom_type_2"/>
</dbReference>
<dbReference type="InterPro" id="IPR009019">
    <property type="entry name" value="KH_sf_prok-type"/>
</dbReference>
<dbReference type="InterPro" id="IPR036419">
    <property type="entry name" value="Ribosomal_S3_C_sf"/>
</dbReference>
<dbReference type="InterPro" id="IPR005704">
    <property type="entry name" value="Ribosomal_uS3_bac-typ"/>
</dbReference>
<dbReference type="InterPro" id="IPR001351">
    <property type="entry name" value="Ribosomal_uS3_C"/>
</dbReference>
<dbReference type="InterPro" id="IPR018280">
    <property type="entry name" value="Ribosomal_uS3_CS"/>
</dbReference>
<dbReference type="NCBIfam" id="TIGR01009">
    <property type="entry name" value="rpsC_bact"/>
    <property type="match status" value="1"/>
</dbReference>
<dbReference type="PANTHER" id="PTHR11760">
    <property type="entry name" value="30S/40S RIBOSOMAL PROTEIN S3"/>
    <property type="match status" value="1"/>
</dbReference>
<dbReference type="PANTHER" id="PTHR11760:SF19">
    <property type="entry name" value="SMALL RIBOSOMAL SUBUNIT PROTEIN US3C"/>
    <property type="match status" value="1"/>
</dbReference>
<dbReference type="Pfam" id="PF07650">
    <property type="entry name" value="KH_2"/>
    <property type="match status" value="1"/>
</dbReference>
<dbReference type="Pfam" id="PF00189">
    <property type="entry name" value="Ribosomal_S3_C"/>
    <property type="match status" value="1"/>
</dbReference>
<dbReference type="SUPFAM" id="SSF54814">
    <property type="entry name" value="Prokaryotic type KH domain (KH-domain type II)"/>
    <property type="match status" value="1"/>
</dbReference>
<dbReference type="SUPFAM" id="SSF54821">
    <property type="entry name" value="Ribosomal protein S3 C-terminal domain"/>
    <property type="match status" value="1"/>
</dbReference>
<dbReference type="PROSITE" id="PS50823">
    <property type="entry name" value="KH_TYPE_2"/>
    <property type="match status" value="1"/>
</dbReference>
<dbReference type="PROSITE" id="PS00548">
    <property type="entry name" value="RIBOSOMAL_S3"/>
    <property type="match status" value="1"/>
</dbReference>
<feature type="chain" id="PRO_1000140947" description="Small ribosomal subunit protein uS3">
    <location>
        <begin position="1"/>
        <end position="234"/>
    </location>
</feature>
<feature type="domain" description="KH type-2" evidence="1">
    <location>
        <begin position="39"/>
        <end position="109"/>
    </location>
</feature>